<reference key="1">
    <citation type="journal article" date="1993" name="Mol. Gen. Genet.">
        <title>Two different Em-like genes are expressed in Arabidopsis thaliana seeds during maturation.</title>
        <authorList>
            <person name="Gaubier P."/>
            <person name="Raynal M."/>
            <person name="Hull G."/>
            <person name="Huestis G.M."/>
            <person name="Grellet F."/>
            <person name="Arenas C."/>
            <person name="Pages M."/>
            <person name="Delseny M."/>
        </authorList>
    </citation>
    <scope>NUCLEOTIDE SEQUENCE [GENOMIC DNA]</scope>
    <source>
        <strain>cv. Columbia</strain>
    </source>
</reference>
<reference key="2">
    <citation type="journal article" date="1993" name="Mol. Gen. Genet.">
        <title>Abscisic acid-insensitive mutations provide evidence for stage-specific signal pathways regulating expression of an Arabidopsis late embryogenesis-abundant (lea) gene.</title>
        <authorList>
            <person name="Finkelstein R.R."/>
        </authorList>
    </citation>
    <scope>NUCLEOTIDE SEQUENCE [GENOMIC DNA]</scope>
    <source>
        <strain>cv. Landsberg erecta</strain>
    </source>
</reference>
<reference key="3">
    <citation type="journal article" date="1999" name="Genome Res.">
        <title>A cluster of ABA-regulated genes on Arabidopsis thaliana BAC T07M07.</title>
        <authorList>
            <person name="Wang M.L."/>
            <person name="Belmonte S."/>
            <person name="Kim U."/>
            <person name="Dolan M."/>
            <person name="Morris J.W."/>
            <person name="Goodman H.M."/>
        </authorList>
    </citation>
    <scope>NUCLEOTIDE SEQUENCE [GENOMIC DNA]</scope>
</reference>
<reference key="4">
    <citation type="journal article" date="1999" name="Nature">
        <title>Sequence and analysis of chromosome 2 of the plant Arabidopsis thaliana.</title>
        <authorList>
            <person name="Lin X."/>
            <person name="Kaul S."/>
            <person name="Rounsley S.D."/>
            <person name="Shea T.P."/>
            <person name="Benito M.-I."/>
            <person name="Town C.D."/>
            <person name="Fujii C.Y."/>
            <person name="Mason T.M."/>
            <person name="Bowman C.L."/>
            <person name="Barnstead M.E."/>
            <person name="Feldblyum T.V."/>
            <person name="Buell C.R."/>
            <person name="Ketchum K.A."/>
            <person name="Lee J.J."/>
            <person name="Ronning C.M."/>
            <person name="Koo H.L."/>
            <person name="Moffat K.S."/>
            <person name="Cronin L.A."/>
            <person name="Shen M."/>
            <person name="Pai G."/>
            <person name="Van Aken S."/>
            <person name="Umayam L."/>
            <person name="Tallon L.J."/>
            <person name="Gill J.E."/>
            <person name="Adams M.D."/>
            <person name="Carrera A.J."/>
            <person name="Creasy T.H."/>
            <person name="Goodman H.M."/>
            <person name="Somerville C.R."/>
            <person name="Copenhaver G.P."/>
            <person name="Preuss D."/>
            <person name="Nierman W.C."/>
            <person name="White O."/>
            <person name="Eisen J.A."/>
            <person name="Salzberg S.L."/>
            <person name="Fraser C.M."/>
            <person name="Venter J.C."/>
        </authorList>
    </citation>
    <scope>NUCLEOTIDE SEQUENCE [LARGE SCALE GENOMIC DNA]</scope>
    <source>
        <strain>cv. Columbia</strain>
    </source>
</reference>
<reference key="5">
    <citation type="journal article" date="2017" name="Plant J.">
        <title>Araport11: a complete reannotation of the Arabidopsis thaliana reference genome.</title>
        <authorList>
            <person name="Cheng C.Y."/>
            <person name="Krishnakumar V."/>
            <person name="Chan A.P."/>
            <person name="Thibaud-Nissen F."/>
            <person name="Schobel S."/>
            <person name="Town C.D."/>
        </authorList>
    </citation>
    <scope>GENOME REANNOTATION</scope>
    <source>
        <strain>cv. Columbia</strain>
    </source>
</reference>
<reference key="6">
    <citation type="journal article" date="2003" name="Science">
        <title>Empirical analysis of transcriptional activity in the Arabidopsis genome.</title>
        <authorList>
            <person name="Yamada K."/>
            <person name="Lim J."/>
            <person name="Dale J.M."/>
            <person name="Chen H."/>
            <person name="Shinn P."/>
            <person name="Palm C.J."/>
            <person name="Southwick A.M."/>
            <person name="Wu H.C."/>
            <person name="Kim C.J."/>
            <person name="Nguyen M."/>
            <person name="Pham P.K."/>
            <person name="Cheuk R.F."/>
            <person name="Karlin-Newmann G."/>
            <person name="Liu S.X."/>
            <person name="Lam B."/>
            <person name="Sakano H."/>
            <person name="Wu T."/>
            <person name="Yu G."/>
            <person name="Miranda M."/>
            <person name="Quach H.L."/>
            <person name="Tripp M."/>
            <person name="Chang C.H."/>
            <person name="Lee J.M."/>
            <person name="Toriumi M.J."/>
            <person name="Chan M.M."/>
            <person name="Tang C.C."/>
            <person name="Onodera C.S."/>
            <person name="Deng J.M."/>
            <person name="Akiyama K."/>
            <person name="Ansari Y."/>
            <person name="Arakawa T."/>
            <person name="Banh J."/>
            <person name="Banno F."/>
            <person name="Bowser L."/>
            <person name="Brooks S.Y."/>
            <person name="Carninci P."/>
            <person name="Chao Q."/>
            <person name="Choy N."/>
            <person name="Enju A."/>
            <person name="Goldsmith A.D."/>
            <person name="Gurjal M."/>
            <person name="Hansen N.F."/>
            <person name="Hayashizaki Y."/>
            <person name="Johnson-Hopson C."/>
            <person name="Hsuan V.W."/>
            <person name="Iida K."/>
            <person name="Karnes M."/>
            <person name="Khan S."/>
            <person name="Koesema E."/>
            <person name="Ishida J."/>
            <person name="Jiang P.X."/>
            <person name="Jones T."/>
            <person name="Kawai J."/>
            <person name="Kamiya A."/>
            <person name="Meyers C."/>
            <person name="Nakajima M."/>
            <person name="Narusaka M."/>
            <person name="Seki M."/>
            <person name="Sakurai T."/>
            <person name="Satou M."/>
            <person name="Tamse R."/>
            <person name="Vaysberg M."/>
            <person name="Wallender E.K."/>
            <person name="Wong C."/>
            <person name="Yamamura Y."/>
            <person name="Yuan S."/>
            <person name="Shinozaki K."/>
            <person name="Davis R.W."/>
            <person name="Theologis A."/>
            <person name="Ecker J.R."/>
        </authorList>
    </citation>
    <scope>NUCLEOTIDE SEQUENCE [LARGE SCALE MRNA]</scope>
    <source>
        <strain>cv. Columbia</strain>
    </source>
</reference>
<proteinExistence type="evidence at transcript level"/>
<protein>
    <recommendedName>
        <fullName>Em-like protein GEA6</fullName>
    </recommendedName>
</protein>
<feature type="chain" id="PRO_0000185677" description="Em-like protein GEA6">
    <location>
        <begin position="1"/>
        <end position="92"/>
    </location>
</feature>
<feature type="region of interest" description="Disordered" evidence="1">
    <location>
        <begin position="1"/>
        <end position="92"/>
    </location>
</feature>
<feature type="compositionally biased region" description="Basic and acidic residues" evidence="1">
    <location>
        <begin position="1"/>
        <end position="18"/>
    </location>
</feature>
<feature type="compositionally biased region" description="Basic and acidic residues" evidence="1">
    <location>
        <begin position="37"/>
        <end position="51"/>
    </location>
</feature>
<sequence length="92" mass="9934">MASQQEKKQLDERAKKGETVVPGGTGGKSFEAQQHLAEGRSRGGQTRKEQLGTEGYQQMGRKGGLSTGDKPGGEHAEEEGVEIDESKFRTKT</sequence>
<organism>
    <name type="scientific">Arabidopsis thaliana</name>
    <name type="common">Mouse-ear cress</name>
    <dbReference type="NCBI Taxonomy" id="3702"/>
    <lineage>
        <taxon>Eukaryota</taxon>
        <taxon>Viridiplantae</taxon>
        <taxon>Streptophyta</taxon>
        <taxon>Embryophyta</taxon>
        <taxon>Tracheophyta</taxon>
        <taxon>Spermatophyta</taxon>
        <taxon>Magnoliopsida</taxon>
        <taxon>eudicotyledons</taxon>
        <taxon>Gunneridae</taxon>
        <taxon>Pentapetalae</taxon>
        <taxon>rosids</taxon>
        <taxon>malvids</taxon>
        <taxon>Brassicales</taxon>
        <taxon>Brassicaceae</taxon>
        <taxon>Camelineae</taxon>
        <taxon>Arabidopsis</taxon>
    </lineage>
</organism>
<keyword id="KW-1185">Reference proteome</keyword>
<evidence type="ECO:0000256" key="1">
    <source>
        <dbReference type="SAM" id="MobiDB-lite"/>
    </source>
</evidence>
<evidence type="ECO:0000305" key="2"/>
<accession>Q02973</accession>
<comment type="function">
    <text>It is thought to provide protection for the cytoplasm during the desiccation stage of embryo development.</text>
</comment>
<comment type="tissue specificity">
    <text>Present only in nearly dry and dry seeds.</text>
</comment>
<comment type="induction">
    <text>By abscisic acid (ABA).</text>
</comment>
<comment type="similarity">
    <text evidence="2">Belongs to the small hydrophilic plant seed protein family.</text>
</comment>
<dbReference type="EMBL" id="Z11923">
    <property type="protein sequence ID" value="CAA77981.1"/>
    <property type="molecule type" value="Genomic_DNA"/>
</dbReference>
<dbReference type="EMBL" id="Z11924">
    <property type="protein sequence ID" value="CAA77982.1"/>
    <property type="molecule type" value="Genomic_DNA"/>
</dbReference>
<dbReference type="EMBL" id="X66023">
    <property type="protein sequence ID" value="CAA46821.1"/>
    <property type="molecule type" value="Genomic_DNA"/>
</dbReference>
<dbReference type="EMBL" id="AF085279">
    <property type="protein sequence ID" value="AAD25932.1"/>
    <property type="molecule type" value="Genomic_DNA"/>
</dbReference>
<dbReference type="EMBL" id="CP002685">
    <property type="protein sequence ID" value="AEC09792.1"/>
    <property type="molecule type" value="Genomic_DNA"/>
</dbReference>
<dbReference type="EMBL" id="AF360157">
    <property type="protein sequence ID" value="AAK25867.1"/>
    <property type="molecule type" value="mRNA"/>
</dbReference>
<dbReference type="EMBL" id="AY113885">
    <property type="protein sequence ID" value="AAM44933.1"/>
    <property type="molecule type" value="mRNA"/>
</dbReference>
<dbReference type="PIR" id="S34802">
    <property type="entry name" value="S34802"/>
</dbReference>
<dbReference type="FunCoup" id="Q02973">
    <property type="interactions" value="101"/>
</dbReference>
<dbReference type="STRING" id="3702.Q02973"/>
<dbReference type="iPTMnet" id="Q02973"/>
<dbReference type="PaxDb" id="3702-AT2G40170.1"/>
<dbReference type="ProteomicsDB" id="222676"/>
<dbReference type="EnsemblPlants" id="AT2G40170.1">
    <property type="protein sequence ID" value="AT2G40170.1"/>
    <property type="gene ID" value="AT2G40170"/>
</dbReference>
<dbReference type="GeneID" id="818608"/>
<dbReference type="Gramene" id="AT2G40170.1">
    <property type="protein sequence ID" value="AT2G40170.1"/>
    <property type="gene ID" value="AT2G40170"/>
</dbReference>
<dbReference type="KEGG" id="ath:AT2G40170"/>
<dbReference type="Araport" id="AT2G40170"/>
<dbReference type="TAIR" id="AT2G40170">
    <property type="gene designation" value="GEA6"/>
</dbReference>
<dbReference type="eggNOG" id="ENOG502S40U">
    <property type="taxonomic scope" value="Eukaryota"/>
</dbReference>
<dbReference type="HOGENOM" id="CLU_144393_0_0_1"/>
<dbReference type="InParanoid" id="Q02973"/>
<dbReference type="OMA" id="HERYSEM"/>
<dbReference type="OrthoDB" id="540492at2759"/>
<dbReference type="PhylomeDB" id="Q02973"/>
<dbReference type="PRO" id="PR:Q02973"/>
<dbReference type="Proteomes" id="UP000006548">
    <property type="component" value="Chromosome 2"/>
</dbReference>
<dbReference type="ExpressionAtlas" id="Q02973">
    <property type="expression patterns" value="baseline and differential"/>
</dbReference>
<dbReference type="GO" id="GO:0005829">
    <property type="term" value="C:cytosol"/>
    <property type="evidence" value="ECO:0007005"/>
    <property type="project" value="TAIR"/>
</dbReference>
<dbReference type="GO" id="GO:0048700">
    <property type="term" value="P:acquisition of desiccation tolerance in seed"/>
    <property type="evidence" value="ECO:0000315"/>
    <property type="project" value="TAIR"/>
</dbReference>
<dbReference type="GO" id="GO:0009737">
    <property type="term" value="P:response to abscisic acid"/>
    <property type="evidence" value="ECO:0000304"/>
    <property type="project" value="TAIR"/>
</dbReference>
<dbReference type="GO" id="GO:0048316">
    <property type="term" value="P:seed development"/>
    <property type="evidence" value="ECO:0000315"/>
    <property type="project" value="TAIR"/>
</dbReference>
<dbReference type="InterPro" id="IPR038956">
    <property type="entry name" value="LEA_5"/>
</dbReference>
<dbReference type="InterPro" id="IPR022377">
    <property type="entry name" value="Sm_Hydphi_plant_seed_CS"/>
</dbReference>
<dbReference type="InterPro" id="IPR000389">
    <property type="entry name" value="Small_hydrophilic_seed_prot"/>
</dbReference>
<dbReference type="PANTHER" id="PTHR34671">
    <property type="entry name" value="EM-LIKE PROTEIN GEA1"/>
    <property type="match status" value="1"/>
</dbReference>
<dbReference type="PANTHER" id="PTHR34671:SF9">
    <property type="entry name" value="EM-LIKE PROTEIN GEA6"/>
    <property type="match status" value="1"/>
</dbReference>
<dbReference type="Pfam" id="PF00477">
    <property type="entry name" value="LEA_5"/>
    <property type="match status" value="1"/>
</dbReference>
<dbReference type="PROSITE" id="PS00431">
    <property type="entry name" value="SMALL_HYDR_PLANT_SEED"/>
    <property type="match status" value="1"/>
</dbReference>
<gene>
    <name type="primary">EM6</name>
    <name type="synonym">ATEM6</name>
    <name type="synonym">D19H</name>
    <name type="ordered locus">At2g40170</name>
    <name type="ORF">T7M7.23</name>
</gene>
<name>EM6_ARATH</name>